<sequence length="130" mass="13959">MAKTANKINIRKVKRKTPKAIIHVQASFNNTIVTVTDVQGQVISSCSAGACGFKGAKKNTPFAAQTAAENAIRLLIDQGLKQAEVMISGPGRGRDTALRAIRNSGITLSLVRDVTPLPHNGCRRPKTRRV</sequence>
<protein>
    <recommendedName>
        <fullName evidence="1">Small ribosomal subunit protein uS11c</fullName>
    </recommendedName>
    <alternativeName>
        <fullName evidence="2">30S ribosomal protein S11, chloroplastic</fullName>
    </alternativeName>
</protein>
<evidence type="ECO:0000255" key="1">
    <source>
        <dbReference type="HAMAP-Rule" id="MF_01310"/>
    </source>
</evidence>
<evidence type="ECO:0000305" key="2"/>
<name>RR11_SPIMX</name>
<organism>
    <name type="scientific">Spirogyra maxima</name>
    <name type="common">Green alga</name>
    <dbReference type="NCBI Taxonomy" id="3180"/>
    <lineage>
        <taxon>Eukaryota</taxon>
        <taxon>Viridiplantae</taxon>
        <taxon>Streptophyta</taxon>
        <taxon>Zygnematophyceae</taxon>
        <taxon>Zygnematophycidae</taxon>
        <taxon>Zygnematales</taxon>
        <taxon>Zygnemataceae</taxon>
        <taxon>Spirogyra</taxon>
    </lineage>
</organism>
<accession>O98461</accession>
<reference key="1">
    <citation type="submission" date="1998-02" db="EMBL/GenBank/DDBJ databases">
        <title>Chloroplast rpl23 gene cluster of Spirogyra maxima (Charophyceae), shared by land plants.</title>
        <authorList>
            <person name="Lee J."/>
            <person name="Manhart J.R."/>
        </authorList>
    </citation>
    <scope>NUCLEOTIDE SEQUENCE [GENOMIC DNA]</scope>
    <source>
        <strain>UTEX LB 2495</strain>
    </source>
</reference>
<comment type="subunit">
    <text evidence="1">Part of the 30S ribosomal subunit.</text>
</comment>
<comment type="subcellular location">
    <subcellularLocation>
        <location>Plastid</location>
        <location>Chloroplast</location>
    </subcellularLocation>
</comment>
<comment type="similarity">
    <text evidence="1">Belongs to the universal ribosomal protein uS11 family.</text>
</comment>
<keyword id="KW-0150">Chloroplast</keyword>
<keyword id="KW-0934">Plastid</keyword>
<keyword id="KW-0687">Ribonucleoprotein</keyword>
<keyword id="KW-0689">Ribosomal protein</keyword>
<keyword id="KW-0694">RNA-binding</keyword>
<keyword id="KW-0699">rRNA-binding</keyword>
<feature type="chain" id="PRO_0000123327" description="Small ribosomal subunit protein uS11c">
    <location>
        <begin position="1"/>
        <end position="130"/>
    </location>
</feature>
<dbReference type="EMBL" id="AF050665">
    <property type="protein sequence ID" value="AAC95317.1"/>
    <property type="molecule type" value="Genomic_DNA"/>
</dbReference>
<dbReference type="RefSeq" id="YP_009258379.1">
    <property type="nucleotide sequence ID" value="NC_030355.1"/>
</dbReference>
<dbReference type="SMR" id="O98461"/>
<dbReference type="GeneID" id="27984741"/>
<dbReference type="GO" id="GO:0009507">
    <property type="term" value="C:chloroplast"/>
    <property type="evidence" value="ECO:0007669"/>
    <property type="project" value="UniProtKB-SubCell"/>
</dbReference>
<dbReference type="GO" id="GO:1990904">
    <property type="term" value="C:ribonucleoprotein complex"/>
    <property type="evidence" value="ECO:0007669"/>
    <property type="project" value="UniProtKB-KW"/>
</dbReference>
<dbReference type="GO" id="GO:0005840">
    <property type="term" value="C:ribosome"/>
    <property type="evidence" value="ECO:0007669"/>
    <property type="project" value="UniProtKB-KW"/>
</dbReference>
<dbReference type="GO" id="GO:0019843">
    <property type="term" value="F:rRNA binding"/>
    <property type="evidence" value="ECO:0007669"/>
    <property type="project" value="UniProtKB-UniRule"/>
</dbReference>
<dbReference type="GO" id="GO:0003735">
    <property type="term" value="F:structural constituent of ribosome"/>
    <property type="evidence" value="ECO:0007669"/>
    <property type="project" value="InterPro"/>
</dbReference>
<dbReference type="GO" id="GO:0006412">
    <property type="term" value="P:translation"/>
    <property type="evidence" value="ECO:0007669"/>
    <property type="project" value="UniProtKB-UniRule"/>
</dbReference>
<dbReference type="Gene3D" id="3.30.420.80">
    <property type="entry name" value="Ribosomal protein S11"/>
    <property type="match status" value="1"/>
</dbReference>
<dbReference type="HAMAP" id="MF_01310">
    <property type="entry name" value="Ribosomal_uS11"/>
    <property type="match status" value="1"/>
</dbReference>
<dbReference type="InterPro" id="IPR001971">
    <property type="entry name" value="Ribosomal_uS11"/>
</dbReference>
<dbReference type="InterPro" id="IPR019981">
    <property type="entry name" value="Ribosomal_uS11_bac-type"/>
</dbReference>
<dbReference type="InterPro" id="IPR018102">
    <property type="entry name" value="Ribosomal_uS11_CS"/>
</dbReference>
<dbReference type="InterPro" id="IPR036967">
    <property type="entry name" value="Ribosomal_uS11_sf"/>
</dbReference>
<dbReference type="NCBIfam" id="NF003698">
    <property type="entry name" value="PRK05309.1"/>
    <property type="match status" value="1"/>
</dbReference>
<dbReference type="NCBIfam" id="TIGR03632">
    <property type="entry name" value="uS11_bact"/>
    <property type="match status" value="1"/>
</dbReference>
<dbReference type="PANTHER" id="PTHR11759">
    <property type="entry name" value="40S RIBOSOMAL PROTEIN S14/30S RIBOSOMAL PROTEIN S11"/>
    <property type="match status" value="1"/>
</dbReference>
<dbReference type="Pfam" id="PF00411">
    <property type="entry name" value="Ribosomal_S11"/>
    <property type="match status" value="1"/>
</dbReference>
<dbReference type="PIRSF" id="PIRSF002131">
    <property type="entry name" value="Ribosomal_S11"/>
    <property type="match status" value="1"/>
</dbReference>
<dbReference type="SUPFAM" id="SSF53137">
    <property type="entry name" value="Translational machinery components"/>
    <property type="match status" value="1"/>
</dbReference>
<dbReference type="PROSITE" id="PS00054">
    <property type="entry name" value="RIBOSOMAL_S11"/>
    <property type="match status" value="1"/>
</dbReference>
<proteinExistence type="inferred from homology"/>
<gene>
    <name evidence="1" type="primary">rps11</name>
</gene>
<geneLocation type="chloroplast"/>